<reference key="1">
    <citation type="journal article" date="2002" name="Proc. Natl. Acad. Sci. U.S.A.">
        <title>Complete genome sequence of Clostridium perfringens, an anaerobic flesh-eater.</title>
        <authorList>
            <person name="Shimizu T."/>
            <person name="Ohtani K."/>
            <person name="Hirakawa H."/>
            <person name="Ohshima K."/>
            <person name="Yamashita A."/>
            <person name="Shiba T."/>
            <person name="Ogasawara N."/>
            <person name="Hattori M."/>
            <person name="Kuhara S."/>
            <person name="Hayashi H."/>
        </authorList>
    </citation>
    <scope>NUCLEOTIDE SEQUENCE [LARGE SCALE GENOMIC DNA]</scope>
    <source>
        <strain>13 / Type A</strain>
    </source>
</reference>
<protein>
    <recommendedName>
        <fullName evidence="1">L-aspartate oxidase</fullName>
        <shortName evidence="1">LASPO</shortName>
        <ecNumber evidence="1">1.4.3.16</ecNumber>
    </recommendedName>
    <alternativeName>
        <fullName>Quinolinate synthase B</fullName>
    </alternativeName>
</protein>
<keyword id="KW-0963">Cytoplasm</keyword>
<keyword id="KW-0274">FAD</keyword>
<keyword id="KW-0285">Flavoprotein</keyword>
<keyword id="KW-0547">Nucleotide-binding</keyword>
<keyword id="KW-0560">Oxidoreductase</keyword>
<keyword id="KW-0662">Pyridine nucleotide biosynthesis</keyword>
<keyword id="KW-1185">Reference proteome</keyword>
<proteinExistence type="inferred from homology"/>
<dbReference type="EC" id="1.4.3.16" evidence="1"/>
<dbReference type="EMBL" id="BA000016">
    <property type="protein sequence ID" value="BAB80101.1"/>
    <property type="molecule type" value="Genomic_DNA"/>
</dbReference>
<dbReference type="RefSeq" id="WP_003471363.1">
    <property type="nucleotide sequence ID" value="NC_003366.1"/>
</dbReference>
<dbReference type="SMR" id="Q8XNE2"/>
<dbReference type="STRING" id="195102.gene:10489651"/>
<dbReference type="KEGG" id="cpe:CPE0395"/>
<dbReference type="HOGENOM" id="CLU_014312_3_1_9"/>
<dbReference type="UniPathway" id="UPA00253">
    <property type="reaction ID" value="UER00326"/>
</dbReference>
<dbReference type="Proteomes" id="UP000000818">
    <property type="component" value="Chromosome"/>
</dbReference>
<dbReference type="GO" id="GO:0005737">
    <property type="term" value="C:cytoplasm"/>
    <property type="evidence" value="ECO:0007669"/>
    <property type="project" value="UniProtKB-SubCell"/>
</dbReference>
<dbReference type="GO" id="GO:0008734">
    <property type="term" value="F:L-aspartate oxidase activity"/>
    <property type="evidence" value="ECO:0007669"/>
    <property type="project" value="UniProtKB-EC"/>
</dbReference>
<dbReference type="GO" id="GO:0000166">
    <property type="term" value="F:nucleotide binding"/>
    <property type="evidence" value="ECO:0007669"/>
    <property type="project" value="UniProtKB-KW"/>
</dbReference>
<dbReference type="GO" id="GO:0033765">
    <property type="term" value="F:steroid dehydrogenase activity, acting on the CH-CH group of donors"/>
    <property type="evidence" value="ECO:0007669"/>
    <property type="project" value="UniProtKB-ARBA"/>
</dbReference>
<dbReference type="GO" id="GO:0034628">
    <property type="term" value="P:'de novo' NAD biosynthetic process from L-aspartate"/>
    <property type="evidence" value="ECO:0007669"/>
    <property type="project" value="TreeGrafter"/>
</dbReference>
<dbReference type="FunFam" id="3.90.700.10:FF:000002">
    <property type="entry name" value="L-aspartate oxidase"/>
    <property type="match status" value="1"/>
</dbReference>
<dbReference type="Gene3D" id="3.50.50.60">
    <property type="entry name" value="FAD/NAD(P)-binding domain"/>
    <property type="match status" value="1"/>
</dbReference>
<dbReference type="Gene3D" id="3.90.700.10">
    <property type="entry name" value="Succinate dehydrogenase/fumarate reductase flavoprotein, catalytic domain"/>
    <property type="match status" value="1"/>
</dbReference>
<dbReference type="InterPro" id="IPR003953">
    <property type="entry name" value="FAD-dep_OxRdtase_2_FAD-bd"/>
</dbReference>
<dbReference type="InterPro" id="IPR036188">
    <property type="entry name" value="FAD/NAD-bd_sf"/>
</dbReference>
<dbReference type="InterPro" id="IPR005288">
    <property type="entry name" value="NadB"/>
</dbReference>
<dbReference type="InterPro" id="IPR027477">
    <property type="entry name" value="Succ_DH/fumarate_Rdtase_cat_sf"/>
</dbReference>
<dbReference type="NCBIfam" id="NF004820">
    <property type="entry name" value="PRK06175.1"/>
    <property type="match status" value="1"/>
</dbReference>
<dbReference type="PANTHER" id="PTHR42716">
    <property type="entry name" value="L-ASPARTATE OXIDASE"/>
    <property type="match status" value="1"/>
</dbReference>
<dbReference type="PANTHER" id="PTHR42716:SF2">
    <property type="entry name" value="L-ASPARTATE OXIDASE, CHLOROPLASTIC"/>
    <property type="match status" value="1"/>
</dbReference>
<dbReference type="Pfam" id="PF00890">
    <property type="entry name" value="FAD_binding_2"/>
    <property type="match status" value="1"/>
</dbReference>
<dbReference type="PRINTS" id="PR00368">
    <property type="entry name" value="FADPNR"/>
</dbReference>
<dbReference type="SUPFAM" id="SSF51905">
    <property type="entry name" value="FAD/NAD(P)-binding domain"/>
    <property type="match status" value="1"/>
</dbReference>
<dbReference type="SUPFAM" id="SSF56425">
    <property type="entry name" value="Succinate dehydrogenase/fumarate reductase flavoprotein, catalytic domain"/>
    <property type="match status" value="1"/>
</dbReference>
<name>NADB_CLOPE</name>
<feature type="chain" id="PRO_0000184383" description="L-aspartate oxidase">
    <location>
        <begin position="1"/>
        <end position="439"/>
    </location>
</feature>
<feature type="active site" description="Proton donor/acceptor" evidence="1">
    <location>
        <position position="267"/>
    </location>
</feature>
<feature type="binding site" evidence="1">
    <location>
        <begin position="12"/>
        <end position="15"/>
    </location>
    <ligand>
        <name>FAD</name>
        <dbReference type="ChEBI" id="CHEBI:57692"/>
    </ligand>
</feature>
<feature type="binding site" evidence="1">
    <location>
        <position position="34"/>
    </location>
    <ligand>
        <name>FAD</name>
        <dbReference type="ChEBI" id="CHEBI:57692"/>
    </ligand>
</feature>
<feature type="binding site" evidence="1">
    <location>
        <begin position="41"/>
        <end position="48"/>
    </location>
    <ligand>
        <name>FAD</name>
        <dbReference type="ChEBI" id="CHEBI:57692"/>
    </ligand>
</feature>
<feature type="binding site" evidence="1">
    <location>
        <position position="204"/>
    </location>
    <ligand>
        <name>FAD</name>
        <dbReference type="ChEBI" id="CHEBI:57692"/>
    </ligand>
</feature>
<feature type="binding site" evidence="1">
    <location>
        <position position="352"/>
    </location>
    <ligand>
        <name>FAD</name>
        <dbReference type="ChEBI" id="CHEBI:57692"/>
    </ligand>
</feature>
<feature type="binding site" evidence="1">
    <location>
        <begin position="368"/>
        <end position="369"/>
    </location>
    <ligand>
        <name>FAD</name>
        <dbReference type="ChEBI" id="CHEBI:57692"/>
    </ligand>
</feature>
<feature type="site" description="Important in orienting the L-aspartate substrate" evidence="1">
    <location>
        <position position="111"/>
    </location>
</feature>
<comment type="function">
    <text evidence="1">Catalyzes the oxidation of L-aspartate to iminoaspartate, the first step in the de novo biosynthesis of NAD(+).</text>
</comment>
<comment type="catalytic activity">
    <reaction evidence="1">
        <text>L-aspartate + O2 = iminosuccinate + H2O2</text>
        <dbReference type="Rhea" id="RHEA:25876"/>
        <dbReference type="ChEBI" id="CHEBI:15379"/>
        <dbReference type="ChEBI" id="CHEBI:16240"/>
        <dbReference type="ChEBI" id="CHEBI:29991"/>
        <dbReference type="ChEBI" id="CHEBI:77875"/>
        <dbReference type="EC" id="1.4.3.16"/>
    </reaction>
    <physiologicalReaction direction="left-to-right" evidence="1">
        <dbReference type="Rhea" id="RHEA:25877"/>
    </physiologicalReaction>
</comment>
<comment type="cofactor">
    <cofactor evidence="1">
        <name>FAD</name>
        <dbReference type="ChEBI" id="CHEBI:57692"/>
    </cofactor>
    <text evidence="1">Binds 1 FAD per subunit.</text>
</comment>
<comment type="pathway">
    <text evidence="1">Cofactor biosynthesis; NAD(+) biosynthesis; iminoaspartate from L-aspartate (oxidase route): step 1/1.</text>
</comment>
<comment type="subcellular location">
    <subcellularLocation>
        <location evidence="1">Cytoplasm</location>
    </subcellularLocation>
</comment>
<comment type="similarity">
    <text evidence="2">Belongs to the FAD-dependent oxidoreductase 2 family. NadB subfamily.</text>
</comment>
<organism>
    <name type="scientific">Clostridium perfringens (strain 13 / Type A)</name>
    <dbReference type="NCBI Taxonomy" id="195102"/>
    <lineage>
        <taxon>Bacteria</taxon>
        <taxon>Bacillati</taxon>
        <taxon>Bacillota</taxon>
        <taxon>Clostridia</taxon>
        <taxon>Eubacteriales</taxon>
        <taxon>Clostridiaceae</taxon>
        <taxon>Clostridium</taxon>
    </lineage>
</organism>
<accession>Q8XNE2</accession>
<gene>
    <name type="primary">nadB</name>
    <name type="ordered locus">CPE0395</name>
</gene>
<sequence>MKRVADVLIVGSGVAGLYASLNLREDLEIIMVSKKSVNLCNSSLAQGGIAVARGKEDFQSFIEDTLKAGKYENNIDSVRVLVEESMDNINKLIDLGANFEKDENGVLFTKEGAHEINRIVYHKDITGKHVEDILLENVKRRKNIKIIEDCEMVDIYHRGNRCIGALFNKDGQDLSIYAKVVILATGGIGGLFKKSTNERIITGDSIGVAIRNNIEIKDLSYIQIHPTAFFSKKSEEKRFLISESVRGEGGKLLNCNGERFVDELLPRDIVSKKIYEEMKKTNSNNVFLDVSFMEKSFLQNRFPNIYNKCLEEGIDISKEPIPVAPAQHYFMGGIKVDLNGKTSMENLYAFGETSCTGVHGANRLASNSLLEALVFSRRGALEINSYIDNLELIIEERECEDLDKYRLLNRKILIDEICRLRGDIKDELVTCGGECKKSS</sequence>
<evidence type="ECO:0000250" key="1">
    <source>
        <dbReference type="UniProtKB" id="P10902"/>
    </source>
</evidence>
<evidence type="ECO:0000305" key="2"/>